<sequence length="231" mass="24695">MASTALEIVAFVVSISGWVLVSSTLPTDYWKVSTIDGTVITTATYFANLWKICVTDSTGVANCKEFPSMLALDGYIQACRGLMIAAVSLGFFGSIFALFGMKCTKVGGSDQAKAKIACLAGIVFILSGLCSMTGCSLYANKITTEFFDPLYMEQKYELGAALFIGWAGASLCIIGGVIFCFSISDNNKTPRMGYTYNGPTSAMSSRTKYQGGEGDFKTTGPSKQFDKNAYV</sequence>
<feature type="chain" id="PRO_0000144758" description="Claudin-10">
    <location>
        <begin position="1"/>
        <end position="231"/>
    </location>
</feature>
<feature type="transmembrane region" description="Helical" evidence="2">
    <location>
        <begin position="1"/>
        <end position="21"/>
    </location>
</feature>
<feature type="topological domain" description="Extracellular" evidence="2">
    <location>
        <begin position="22"/>
        <end position="80"/>
    </location>
</feature>
<feature type="transmembrane region" description="Helical" evidence="2">
    <location>
        <begin position="81"/>
        <end position="101"/>
    </location>
</feature>
<feature type="topological domain" description="Cytoplasmic" evidence="2">
    <location>
        <begin position="102"/>
        <end position="115"/>
    </location>
</feature>
<feature type="transmembrane region" description="Helical" evidence="2">
    <location>
        <begin position="116"/>
        <end position="136"/>
    </location>
</feature>
<feature type="topological domain" description="Extracellular" evidence="2">
    <location>
        <begin position="137"/>
        <end position="160"/>
    </location>
</feature>
<feature type="transmembrane region" description="Helical" evidence="2">
    <location>
        <begin position="161"/>
        <end position="181"/>
    </location>
</feature>
<feature type="topological domain" description="Cytoplasmic" evidence="2">
    <location>
        <begin position="182"/>
        <end position="231"/>
    </location>
</feature>
<feature type="splice variant" id="VSP_053551" description="In isoform 2 and isoform 3." evidence="12 13 14 15">
    <original>MASTALEIVAFVVSISGWVLVSSTLPTDYWKVSTIDGTVITTATYFANLWKICVTDSTGVANCKEFPSMLALD</original>
    <variation>MSRAQISALVCGVGGFGALVAATTSNEWKVTTRASSVITATWVYQGLWMNCAGNALGSFHCRPHFTIFKVE</variation>
    <location>
        <begin position="1"/>
        <end position="73"/>
    </location>
</feature>
<feature type="splice variant" id="VSP_053552" description="In isoform 4 and isoform 5." evidence="15">
    <original>MASTALEIVAFVVSISGWVLVSSTLPTDYWKVSTIDGTVITTATYFANLWKICVTDSTGVANCKEFPSMLALD</original>
    <variation>MSRAQISALVCGVGGFGALVAATTSNEWKVTTRASSVITATWVYQGLWMNCA</variation>
    <location>
        <begin position="1"/>
        <end position="73"/>
    </location>
</feature>
<feature type="splice variant" id="VSP_053553" description="In isoform 3, isoform 5 and isoform 6." evidence="12 15">
    <location>
        <begin position="156"/>
        <end position="191"/>
    </location>
</feature>
<feature type="sequence conflict" description="In Ref. 1; BAB32005." evidence="16" ref="1">
    <original>T</original>
    <variation>S</variation>
    <location>
        <position position="104"/>
    </location>
</feature>
<feature type="sequence conflict" description="In Ref. 1; AAD17320 and 6; AAH21770/AAH29019." evidence="16" ref="1 6">
    <original>A</original>
    <variation>V</variation>
    <location>
        <position position="202"/>
    </location>
</feature>
<feature type="sequence conflict" description="In Ref. 1; AAD17320, 6; AAH21770/AAH29019 and 3; no nucleotide entry." evidence="16" ref="1 6 3">
    <original>T</original>
    <variation>A</variation>
    <location>
        <position position="219"/>
    </location>
</feature>
<feature type="mutagenesis site" description="Abolishes anion-selective permeability." evidence="5">
    <original>R</original>
    <variation>D</variation>
    <location sequence="Q9Z0S6-2">
        <position position="33"/>
    </location>
</feature>
<feature type="mutagenesis site" description="Abolishes anion-selective permeability." evidence="5">
    <original>R</original>
    <variation>D</variation>
    <location sequence="Q9Z0S6-2">
        <position position="62"/>
    </location>
</feature>
<feature type="mutagenesis site" description="Does not affect anion-selective permeability." evidence="5">
    <original>K</original>
    <variation>D</variation>
    <location sequence="Q9Z0S6-2">
        <position position="69"/>
    </location>
</feature>
<accession>Q9Z0S6</accession>
<accession>E9PVC8</accession>
<accession>E9PWP4</accession>
<accession>E9QMP1</accession>
<accession>Q8VC62</accession>
<accession>Q9CX57</accession>
<evidence type="ECO:0000250" key="1">
    <source>
        <dbReference type="UniProtKB" id="P78369"/>
    </source>
</evidence>
<evidence type="ECO:0000255" key="2"/>
<evidence type="ECO:0000269" key="3">
    <source>
    </source>
</evidence>
<evidence type="ECO:0000269" key="4">
    <source>
    </source>
</evidence>
<evidence type="ECO:0000269" key="5">
    <source>
    </source>
</evidence>
<evidence type="ECO:0000269" key="6">
    <source>
    </source>
</evidence>
<evidence type="ECO:0000269" key="7">
    <source>
    </source>
</evidence>
<evidence type="ECO:0000269" key="8">
    <source>
    </source>
</evidence>
<evidence type="ECO:0000269" key="9">
    <source>
    </source>
</evidence>
<evidence type="ECO:0000269" key="10">
    <source>
    </source>
</evidence>
<evidence type="ECO:0000269" key="11">
    <source>
    </source>
</evidence>
<evidence type="ECO:0000303" key="12">
    <source>
    </source>
</evidence>
<evidence type="ECO:0000303" key="13">
    <source>
    </source>
</evidence>
<evidence type="ECO:0000303" key="14">
    <source>
    </source>
</evidence>
<evidence type="ECO:0000303" key="15">
    <source>
    </source>
</evidence>
<evidence type="ECO:0000305" key="16"/>
<evidence type="ECO:0000305" key="17">
    <source>
    </source>
</evidence>
<evidence type="ECO:0000312" key="18">
    <source>
        <dbReference type="MGI" id="MGI:1913101"/>
    </source>
</evidence>
<reference key="1">
    <citation type="submission" date="1999-01" db="EMBL/GenBank/DDBJ databases">
        <authorList>
            <person name="Morita K."/>
            <person name="Furuse M."/>
            <person name="Tsukita S."/>
        </authorList>
    </citation>
    <scope>NUCLEOTIDE SEQUENCE [MRNA] (ISOFORM 1)</scope>
    <source>
        <tissue>Kidney</tissue>
    </source>
</reference>
<reference key="2">
    <citation type="journal article" date="2006" name="Am. J. Physiol.">
        <title>Two splice variants of claudin-10 in the kidney create paracellular pores with different ion selectivities.</title>
        <authorList>
            <person name="Van Itallie C.M."/>
            <person name="Rogan S."/>
            <person name="Yu A."/>
            <person name="Vidal L.S."/>
            <person name="Holmes J."/>
            <person name="Anderson J.M."/>
        </authorList>
    </citation>
    <scope>NUCLEOTIDE SEQUENCE [MRNA] (ISOFORMS 1 AND 2)</scope>
    <scope>FUNCTION (ISOFORMS 1 AND 2)</scope>
    <scope>TRANSPORTER ACTIVITY (ISOFORMS 1 AND 2)</scope>
    <scope>SUBCELLULAR LOCATION (ISOFORMS 1 AND 2)</scope>
    <scope>ALTERNATIVE SPLICING</scope>
    <scope>TISSUE SPECIFICITY (ISOFORMS 1 AND 2)</scope>
    <scope>MUTAGENESIS OF ARG-33; ARG-62 AND LYS-69 (ISOFORM 2)</scope>
</reference>
<reference key="3">
    <citation type="journal article" date="2009" name="J. Cell Sci.">
        <title>Claudin-10 exists in six alternatively spliced isoforms that exhibit distinct localization and function.</title>
        <authorList>
            <person name="Gunzel D."/>
            <person name="Stuiver M."/>
            <person name="Kausalya P.J."/>
            <person name="Haisch L."/>
            <person name="Krug S.M."/>
            <person name="Rosenthal R."/>
            <person name="Meij I.C."/>
            <person name="Hunziker W."/>
            <person name="Fromm M."/>
            <person name="Muller D."/>
        </authorList>
    </citation>
    <scope>NUCLEOTIDE SEQUENCE [MRNA] (ISOFORMS 1; 2; 3; 4; 5 AND 6)</scope>
    <scope>FUNCTION (ISOFORMS 1 AND 2)</scope>
    <scope>TRANSPORTER ACTIVITY (ISOFORMS 1 AND 2)</scope>
    <scope>SUBCELLULAR LOCATION (ISOFORMS 1; 2; 3; 4; 5 AND 6)</scope>
    <scope>ALTERNATIVE SPLICING</scope>
    <scope>TISSUE SPECIFICITY (ISOFORMS 1; 2; 3; 4 AND 5)</scope>
    <scope>DOMAIN</scope>
    <source>
        <tissue>Kidney</tissue>
    </source>
</reference>
<reference key="4">
    <citation type="journal article" date="2005" name="Science">
        <title>The transcriptional landscape of the mammalian genome.</title>
        <authorList>
            <person name="Carninci P."/>
            <person name="Kasukawa T."/>
            <person name="Katayama S."/>
            <person name="Gough J."/>
            <person name="Frith M.C."/>
            <person name="Maeda N."/>
            <person name="Oyama R."/>
            <person name="Ravasi T."/>
            <person name="Lenhard B."/>
            <person name="Wells C."/>
            <person name="Kodzius R."/>
            <person name="Shimokawa K."/>
            <person name="Bajic V.B."/>
            <person name="Brenner S.E."/>
            <person name="Batalov S."/>
            <person name="Forrest A.R."/>
            <person name="Zavolan M."/>
            <person name="Davis M.J."/>
            <person name="Wilming L.G."/>
            <person name="Aidinis V."/>
            <person name="Allen J.E."/>
            <person name="Ambesi-Impiombato A."/>
            <person name="Apweiler R."/>
            <person name="Aturaliya R.N."/>
            <person name="Bailey T.L."/>
            <person name="Bansal M."/>
            <person name="Baxter L."/>
            <person name="Beisel K.W."/>
            <person name="Bersano T."/>
            <person name="Bono H."/>
            <person name="Chalk A.M."/>
            <person name="Chiu K.P."/>
            <person name="Choudhary V."/>
            <person name="Christoffels A."/>
            <person name="Clutterbuck D.R."/>
            <person name="Crowe M.L."/>
            <person name="Dalla E."/>
            <person name="Dalrymple B.P."/>
            <person name="de Bono B."/>
            <person name="Della Gatta G."/>
            <person name="di Bernardo D."/>
            <person name="Down T."/>
            <person name="Engstrom P."/>
            <person name="Fagiolini M."/>
            <person name="Faulkner G."/>
            <person name="Fletcher C.F."/>
            <person name="Fukushima T."/>
            <person name="Furuno M."/>
            <person name="Futaki S."/>
            <person name="Gariboldi M."/>
            <person name="Georgii-Hemming P."/>
            <person name="Gingeras T.R."/>
            <person name="Gojobori T."/>
            <person name="Green R.E."/>
            <person name="Gustincich S."/>
            <person name="Harbers M."/>
            <person name="Hayashi Y."/>
            <person name="Hensch T.K."/>
            <person name="Hirokawa N."/>
            <person name="Hill D."/>
            <person name="Huminiecki L."/>
            <person name="Iacono M."/>
            <person name="Ikeo K."/>
            <person name="Iwama A."/>
            <person name="Ishikawa T."/>
            <person name="Jakt M."/>
            <person name="Kanapin A."/>
            <person name="Katoh M."/>
            <person name="Kawasawa Y."/>
            <person name="Kelso J."/>
            <person name="Kitamura H."/>
            <person name="Kitano H."/>
            <person name="Kollias G."/>
            <person name="Krishnan S.P."/>
            <person name="Kruger A."/>
            <person name="Kummerfeld S.K."/>
            <person name="Kurochkin I.V."/>
            <person name="Lareau L.F."/>
            <person name="Lazarevic D."/>
            <person name="Lipovich L."/>
            <person name="Liu J."/>
            <person name="Liuni S."/>
            <person name="McWilliam S."/>
            <person name="Madan Babu M."/>
            <person name="Madera M."/>
            <person name="Marchionni L."/>
            <person name="Matsuda H."/>
            <person name="Matsuzawa S."/>
            <person name="Miki H."/>
            <person name="Mignone F."/>
            <person name="Miyake S."/>
            <person name="Morris K."/>
            <person name="Mottagui-Tabar S."/>
            <person name="Mulder N."/>
            <person name="Nakano N."/>
            <person name="Nakauchi H."/>
            <person name="Ng P."/>
            <person name="Nilsson R."/>
            <person name="Nishiguchi S."/>
            <person name="Nishikawa S."/>
            <person name="Nori F."/>
            <person name="Ohara O."/>
            <person name="Okazaki Y."/>
            <person name="Orlando V."/>
            <person name="Pang K.C."/>
            <person name="Pavan W.J."/>
            <person name="Pavesi G."/>
            <person name="Pesole G."/>
            <person name="Petrovsky N."/>
            <person name="Piazza S."/>
            <person name="Reed J."/>
            <person name="Reid J.F."/>
            <person name="Ring B.Z."/>
            <person name="Ringwald M."/>
            <person name="Rost B."/>
            <person name="Ruan Y."/>
            <person name="Salzberg S.L."/>
            <person name="Sandelin A."/>
            <person name="Schneider C."/>
            <person name="Schoenbach C."/>
            <person name="Sekiguchi K."/>
            <person name="Semple C.A."/>
            <person name="Seno S."/>
            <person name="Sessa L."/>
            <person name="Sheng Y."/>
            <person name="Shibata Y."/>
            <person name="Shimada H."/>
            <person name="Shimada K."/>
            <person name="Silva D."/>
            <person name="Sinclair B."/>
            <person name="Sperling S."/>
            <person name="Stupka E."/>
            <person name="Sugiura K."/>
            <person name="Sultana R."/>
            <person name="Takenaka Y."/>
            <person name="Taki K."/>
            <person name="Tammoja K."/>
            <person name="Tan S.L."/>
            <person name="Tang S."/>
            <person name="Taylor M.S."/>
            <person name="Tegner J."/>
            <person name="Teichmann S.A."/>
            <person name="Ueda H.R."/>
            <person name="van Nimwegen E."/>
            <person name="Verardo R."/>
            <person name="Wei C.L."/>
            <person name="Yagi K."/>
            <person name="Yamanishi H."/>
            <person name="Zabarovsky E."/>
            <person name="Zhu S."/>
            <person name="Zimmer A."/>
            <person name="Hide W."/>
            <person name="Bult C."/>
            <person name="Grimmond S.M."/>
            <person name="Teasdale R.D."/>
            <person name="Liu E.T."/>
            <person name="Brusic V."/>
            <person name="Quackenbush J."/>
            <person name="Wahlestedt C."/>
            <person name="Mattick J.S."/>
            <person name="Hume D.A."/>
            <person name="Kai C."/>
            <person name="Sasaki D."/>
            <person name="Tomaru Y."/>
            <person name="Fukuda S."/>
            <person name="Kanamori-Katayama M."/>
            <person name="Suzuki M."/>
            <person name="Aoki J."/>
            <person name="Arakawa T."/>
            <person name="Iida J."/>
            <person name="Imamura K."/>
            <person name="Itoh M."/>
            <person name="Kato T."/>
            <person name="Kawaji H."/>
            <person name="Kawagashira N."/>
            <person name="Kawashima T."/>
            <person name="Kojima M."/>
            <person name="Kondo S."/>
            <person name="Konno H."/>
            <person name="Nakano K."/>
            <person name="Ninomiya N."/>
            <person name="Nishio T."/>
            <person name="Okada M."/>
            <person name="Plessy C."/>
            <person name="Shibata K."/>
            <person name="Shiraki T."/>
            <person name="Suzuki S."/>
            <person name="Tagami M."/>
            <person name="Waki K."/>
            <person name="Watahiki A."/>
            <person name="Okamura-Oho Y."/>
            <person name="Suzuki H."/>
            <person name="Kawai J."/>
            <person name="Hayashizaki Y."/>
        </authorList>
    </citation>
    <scope>NUCLEOTIDE SEQUENCE [LARGE SCALE MRNA] (ISOFORMS 1 AND 2)</scope>
    <source>
        <strain>C57BL/6J</strain>
        <tissue>Wolffian duct</tissue>
    </source>
</reference>
<reference key="5">
    <citation type="journal article" date="2009" name="PLoS Biol.">
        <title>Lineage-specific biology revealed by a finished genome assembly of the mouse.</title>
        <authorList>
            <person name="Church D.M."/>
            <person name="Goodstadt L."/>
            <person name="Hillier L.W."/>
            <person name="Zody M.C."/>
            <person name="Goldstein S."/>
            <person name="She X."/>
            <person name="Bult C.J."/>
            <person name="Agarwala R."/>
            <person name="Cherry J.L."/>
            <person name="DiCuccio M."/>
            <person name="Hlavina W."/>
            <person name="Kapustin Y."/>
            <person name="Meric P."/>
            <person name="Maglott D."/>
            <person name="Birtle Z."/>
            <person name="Marques A.C."/>
            <person name="Graves T."/>
            <person name="Zhou S."/>
            <person name="Teague B."/>
            <person name="Potamousis K."/>
            <person name="Churas C."/>
            <person name="Place M."/>
            <person name="Herschleb J."/>
            <person name="Runnheim R."/>
            <person name="Forrest D."/>
            <person name="Amos-Landgraf J."/>
            <person name="Schwartz D.C."/>
            <person name="Cheng Z."/>
            <person name="Lindblad-Toh K."/>
            <person name="Eichler E.E."/>
            <person name="Ponting C.P."/>
        </authorList>
    </citation>
    <scope>NUCLEOTIDE SEQUENCE [LARGE SCALE GENOMIC DNA]</scope>
    <source>
        <strain>C57BL/6J</strain>
    </source>
</reference>
<reference key="6">
    <citation type="journal article" date="2004" name="Genome Res.">
        <title>The status, quality, and expansion of the NIH full-length cDNA project: the Mammalian Gene Collection (MGC).</title>
        <authorList>
            <consortium name="The MGC Project Team"/>
        </authorList>
    </citation>
    <scope>NUCLEOTIDE SEQUENCE [LARGE SCALE MRNA] (ISOFORMS 1 AND 3)</scope>
    <source>
        <strain>FVB/N</strain>
        <tissue>Kidney</tissue>
        <tissue>Mammary gland</tissue>
    </source>
</reference>
<reference key="7">
    <citation type="journal article" date="2004" name="Hear. Res.">
        <title>Expression patterns of claudins, tight junction adhesion molecules, in the inner ear.</title>
        <authorList>
            <person name="Kitajiri S.I."/>
            <person name="Furuse M."/>
            <person name="Morita K."/>
            <person name="Saishin-Kiuchi Y."/>
            <person name="Kido H."/>
            <person name="Ito J."/>
            <person name="Tsukita S."/>
        </authorList>
    </citation>
    <scope>TISSUE SPECIFICITY</scope>
</reference>
<reference key="8">
    <citation type="journal article" date="2006" name="J. Vet. Med. Sci.">
        <title>Developmental changes in the expression of tight junction protein claudins in murine metanephroi and embryonic kidneys.</title>
        <authorList>
            <person name="Ohta H."/>
            <person name="Adachi H."/>
            <person name="Inaba M."/>
        </authorList>
    </citation>
    <scope>DEVELOPMENTAL STAGE</scope>
</reference>
<reference key="9">
    <citation type="journal article" date="2007" name="Dev. Dyn.">
        <title>Expression of claudins in murine tooth development.</title>
        <authorList>
            <person name="Ohazama A."/>
            <person name="Sharpe P.T."/>
        </authorList>
    </citation>
    <scope>DEVELOPMENTAL STAGE</scope>
</reference>
<reference key="10">
    <citation type="journal article" date="2010" name="Cell">
        <title>A tissue-specific atlas of mouse protein phosphorylation and expression.</title>
        <authorList>
            <person name="Huttlin E.L."/>
            <person name="Jedrychowski M.P."/>
            <person name="Elias J.E."/>
            <person name="Goswami T."/>
            <person name="Rad R."/>
            <person name="Beausoleil S.A."/>
            <person name="Villen J."/>
            <person name="Haas W."/>
            <person name="Sowa M.E."/>
            <person name="Gygi S.P."/>
        </authorList>
    </citation>
    <scope>IDENTIFICATION BY MASS SPECTROMETRY [LARGE SCALE ANALYSIS]</scope>
    <source>
        <tissue>Pancreas</tissue>
    </source>
</reference>
<reference key="11">
    <citation type="journal article" date="2010" name="J. Cell Sci.">
        <title>Claudin-2, a component of the tight junction, forms a paracellular water channel.</title>
        <authorList>
            <person name="Rosenthal R."/>
            <person name="Milatz S."/>
            <person name="Krug S.M."/>
            <person name="Oelrich B."/>
            <person name="Schulzke J.D."/>
            <person name="Amasheh S."/>
            <person name="Guenzel D."/>
            <person name="Fromm M."/>
        </authorList>
    </citation>
    <scope>FUNCTION (ISOFORM 1)</scope>
    <scope>TRANSPORTER ACTIVITY (ISOFORM 1)</scope>
    <scope>SUBCELLULAR LOCATION (ISOFORM 1)</scope>
</reference>
<reference key="12">
    <citation type="journal article" date="2012" name="Proc. Natl. Acad. Sci. U.S.A.">
        <title>Deletion of claudin-10 (Cldn10) in the thick ascending limb impairs paracellular sodium permeability and leads to hypermagnesemia and nephrocalcinosis.</title>
        <authorList>
            <person name="Breiderhoff T."/>
            <person name="Himmerkus N."/>
            <person name="Stuiver M."/>
            <person name="Mutig K."/>
            <person name="Will C."/>
            <person name="Meij I.C."/>
            <person name="Bachmann S."/>
            <person name="Bleich M."/>
            <person name="Willnow T.E."/>
            <person name="Muller D."/>
        </authorList>
    </citation>
    <scope>FUNCTION (ISOFORM 1)</scope>
    <scope>TISSUE SPECIFICITY (ISOFORM 1)</scope>
    <scope>DISRUPTION PHENOTYPE (ISOFORM 1)</scope>
</reference>
<reference key="13">
    <citation type="journal article" date="2018" name="Genet. Med.">
        <title>Multiplex epithelium dysfunction due to CLDN10 mutation: the HELIX syndrome.</title>
        <authorList>
            <person name="Hadj-Rabia S."/>
            <person name="Brideau G."/>
            <person name="Al-Sarraj Y."/>
            <person name="Maroun R.C."/>
            <person name="Figueres M.L."/>
            <person name="Leclerc-Mercier S."/>
            <person name="Olinger E."/>
            <person name="Baron S."/>
            <person name="Chaussain C."/>
            <person name="Nochy D."/>
            <person name="Taha R.Z."/>
            <person name="Knebelmann B."/>
            <person name="Joshi V."/>
            <person name="Curmi P.A."/>
            <person name="Kambouris M."/>
            <person name="Vargas-Poussou R."/>
            <person name="Bodemer C."/>
            <person name="Devuyst O."/>
            <person name="Houillier P."/>
            <person name="El-Shanti H."/>
        </authorList>
    </citation>
    <scope>TISSUE SPECIFICITY (ISOFORMS 1 AND 2)</scope>
</reference>
<reference key="14">
    <citation type="journal article" date="2022" name="J. Am. Soc. Nephrol.">
        <title>Claudin-10a Deficiency Shifts Proximal Tubular Cl- Permeability to Cation Selectivity via Claudin-2 Redistribution.</title>
        <authorList>
            <person name="Breiderhoff T."/>
            <person name="Himmerkus N."/>
            <person name="Meoli L."/>
            <person name="Fromm A."/>
            <person name="Sewerin S."/>
            <person name="Kriuchkova N."/>
            <person name="Nagel O."/>
            <person name="Ladilov Y."/>
            <person name="Krug S.M."/>
            <person name="Quintanova C."/>
            <person name="Stumpp M."/>
            <person name="Garbe-Schoenberg D."/>
            <person name="Westernstroeer U."/>
            <person name="Merkel C."/>
            <person name="Brinkhus M.A."/>
            <person name="Altmueller J."/>
            <person name="Schweiger M.R."/>
            <person name="Mueller D."/>
            <person name="Mutig K."/>
            <person name="Morawski M."/>
            <person name="Halbritter J."/>
            <person name="Milatz S."/>
            <person name="Bleich M."/>
            <person name="Guenzel D."/>
        </authorList>
    </citation>
    <scope>FUNCTION (ISOFORM 2)</scope>
    <scope>SUBCELLULAR LOCATION (ISOFORM 2)</scope>
    <scope>TISSUE SPECIFICITY (ISOFORM 2)</scope>
    <scope>DISRUPTION PHENOTYPE (ISOFORM 2)</scope>
</reference>
<proteinExistence type="evidence at protein level"/>
<organism>
    <name type="scientific">Mus musculus</name>
    <name type="common">Mouse</name>
    <dbReference type="NCBI Taxonomy" id="10090"/>
    <lineage>
        <taxon>Eukaryota</taxon>
        <taxon>Metazoa</taxon>
        <taxon>Chordata</taxon>
        <taxon>Craniata</taxon>
        <taxon>Vertebrata</taxon>
        <taxon>Euteleostomi</taxon>
        <taxon>Mammalia</taxon>
        <taxon>Eutheria</taxon>
        <taxon>Euarchontoglires</taxon>
        <taxon>Glires</taxon>
        <taxon>Rodentia</taxon>
        <taxon>Myomorpha</taxon>
        <taxon>Muroidea</taxon>
        <taxon>Muridae</taxon>
        <taxon>Murinae</taxon>
        <taxon>Mus</taxon>
        <taxon>Mus</taxon>
    </lineage>
</organism>
<gene>
    <name evidence="18" type="primary">Cldn10</name>
    <name type="synonym">Cldn10a</name>
</gene>
<comment type="function">
    <text evidence="5 7 8">Forms paracellular channels: polymerizes in tight junction strands with cation- and anion-selective channels through the strands, conveying epithelial permeability in a process known as paracellular tight junction permeability.</text>
</comment>
<comment type="function">
    <molecule>Isoform 1</molecule>
    <text evidence="1 5 7 8 9">Forms cation-selective paracellular channels. In sweat glands and in the thick ascending limb (TAL) of Henle's loop in kidney, it controls paracellular sodium permeability which is essential for proper sweat production and renal function.</text>
</comment>
<comment type="function">
    <molecule>Isoform 2</molecule>
    <text evidence="5 7 11">Forms anion-selective paracellular channels. In renal proximal tubules, it conveys selective chloride over hydrogencarbonate anion permeability which is required for renal chloride reabsorption and salt homeostasis.</text>
</comment>
<comment type="catalytic activity">
    <molecule>Isoform 1</molecule>
    <reaction evidence="5 7 8">
        <text>Na(+)(in) = Na(+)(out)</text>
        <dbReference type="Rhea" id="RHEA:34963"/>
        <dbReference type="ChEBI" id="CHEBI:29101"/>
    </reaction>
</comment>
<comment type="catalytic activity">
    <molecule>Isoform 1</molecule>
    <reaction evidence="7 8">
        <text>Li(+)(in) = Li(+)(out)</text>
        <dbReference type="Rhea" id="RHEA:78551"/>
        <dbReference type="ChEBI" id="CHEBI:49713"/>
    </reaction>
</comment>
<comment type="catalytic activity">
    <molecule>Isoform 1</molecule>
    <reaction evidence="7 8">
        <text>K(+)(in) = K(+)(out)</text>
        <dbReference type="Rhea" id="RHEA:29463"/>
        <dbReference type="ChEBI" id="CHEBI:29103"/>
    </reaction>
</comment>
<comment type="catalytic activity">
    <molecule>Isoform 1</molecule>
    <reaction evidence="7 8">
        <text>Rb(+)(in) = Rb(+)(out)</text>
        <dbReference type="Rhea" id="RHEA:78547"/>
        <dbReference type="ChEBI" id="CHEBI:49847"/>
    </reaction>
</comment>
<comment type="catalytic activity">
    <molecule>Isoform 1</molecule>
    <reaction evidence="7 8">
        <text>Cs(+)(in) = Cs(+)(out)</text>
        <dbReference type="Rhea" id="RHEA:78555"/>
        <dbReference type="ChEBI" id="CHEBI:49547"/>
    </reaction>
</comment>
<comment type="catalytic activity">
    <molecule>Isoform 1</molecule>
    <reaction evidence="1">
        <text>NH4(+)(in) = NH4(+)(out)</text>
        <dbReference type="Rhea" id="RHEA:28747"/>
        <dbReference type="ChEBI" id="CHEBI:28938"/>
    </reaction>
</comment>
<comment type="catalytic activity">
    <molecule>Isoform 1</molecule>
    <reaction evidence="1">
        <text>methylamine(out) = methylamine(in)</text>
        <dbReference type="Rhea" id="RHEA:74391"/>
        <dbReference type="ChEBI" id="CHEBI:59338"/>
    </reaction>
</comment>
<comment type="catalytic activity">
    <molecule>Isoform 1</molecule>
    <reaction evidence="7">
        <text>Mg(2+)(in) = Mg(2+)(out)</text>
        <dbReference type="Rhea" id="RHEA:29827"/>
        <dbReference type="ChEBI" id="CHEBI:18420"/>
    </reaction>
</comment>
<comment type="catalytic activity">
    <molecule>Isoform 1</molecule>
    <reaction evidence="7">
        <text>Ca(2+)(in) = Ca(2+)(out)</text>
        <dbReference type="Rhea" id="RHEA:29671"/>
        <dbReference type="ChEBI" id="CHEBI:29108"/>
    </reaction>
</comment>
<comment type="catalytic activity">
    <molecule>Isoform 1</molecule>
    <reaction evidence="7">
        <text>Sr(2+)(in) = Sr(2+)(out)</text>
        <dbReference type="Rhea" id="RHEA:78679"/>
        <dbReference type="ChEBI" id="CHEBI:35104"/>
    </reaction>
</comment>
<comment type="catalytic activity">
    <molecule>Isoform 2</molecule>
    <reaction evidence="5 7">
        <text>chloride(in) = chloride(out)</text>
        <dbReference type="Rhea" id="RHEA:29823"/>
        <dbReference type="ChEBI" id="CHEBI:17996"/>
    </reaction>
</comment>
<comment type="catalytic activity">
    <molecule>Isoform 2</molecule>
    <reaction evidence="7">
        <text>nitrate(in) = nitrate(out)</text>
        <dbReference type="Rhea" id="RHEA:34923"/>
        <dbReference type="ChEBI" id="CHEBI:17632"/>
    </reaction>
</comment>
<comment type="subunit">
    <text evidence="1">Can form homodimers both in trans (interaction between CLDN10 molecules in opposing membranes) and in cis (interaction between CLDN10 molecules within one membrane). Interacts with CLDN19.</text>
</comment>
<comment type="interaction">
    <interactant intactId="EBI-15799971">
        <id>Q9Z0S6</id>
    </interactant>
    <interactant intactId="EBI-12256978">
        <id>Q8N6F1-2</id>
        <label>CLDN19</label>
    </interactant>
    <organismsDiffer>true</organismsDiffer>
    <experiments>2</experiments>
</comment>
<comment type="subcellular location">
    <molecule>Isoform 1</molecule>
    <subcellularLocation>
        <location evidence="5 7 8">Cell junction</location>
        <location evidence="5 7 8">Tight junction</location>
    </subcellularLocation>
    <subcellularLocation>
        <location evidence="5 7 8">Cell membrane</location>
        <topology evidence="2">Multi-pass membrane protein</topology>
    </subcellularLocation>
</comment>
<comment type="subcellular location">
    <molecule>Isoform 2</molecule>
    <subcellularLocation>
        <location evidence="5 7 17">Cell junction</location>
        <location evidence="5 7 17">Tight junction</location>
    </subcellularLocation>
    <subcellularLocation>
        <location evidence="5 7 11">Cell membrane</location>
        <topology evidence="2">Multi-pass membrane protein</topology>
    </subcellularLocation>
</comment>
<comment type="subcellular location">
    <molecule>Isoform 3</molecule>
    <subcellularLocation>
        <location evidence="7">Endoplasmic reticulum</location>
    </subcellularLocation>
</comment>
<comment type="subcellular location">
    <molecule>Isoform 4</molecule>
    <subcellularLocation>
        <location evidence="7">Cell junction</location>
        <location evidence="7">Tight junction</location>
    </subcellularLocation>
    <subcellularLocation>
        <location evidence="7">Cell membrane</location>
        <topology evidence="2">Multi-pass membrane protein</topology>
    </subcellularLocation>
</comment>
<comment type="subcellular location">
    <molecule>Isoform 5</molecule>
    <subcellularLocation>
        <location evidence="7">Endoplasmic reticulum</location>
    </subcellularLocation>
</comment>
<comment type="subcellular location">
    <molecule>Isoform 6</molecule>
    <subcellularLocation>
        <location evidence="7">Endoplasmic reticulum</location>
    </subcellularLocation>
</comment>
<comment type="alternative products">
    <event type="alternative splicing"/>
    <isoform>
        <id>Q9Z0S6-1</id>
        <name>1</name>
        <name evidence="15">Cldn10b</name>
        <sequence type="displayed"/>
    </isoform>
    <isoform>
        <id>Q9Z0S6-2</id>
        <name>2</name>
        <name evidence="15">Cldn10a</name>
        <sequence type="described" ref="VSP_053551"/>
    </isoform>
    <isoform>
        <id>Q9Z0S6-3</id>
        <name>3</name>
        <name evidence="15">Cldn10a_i2</name>
        <sequence type="described" ref="VSP_053551 VSP_053553"/>
    </isoform>
    <isoform>
        <id>Q9Z0S6-4</id>
        <name>4</name>
        <name evidence="15">Cldn10a_i1</name>
        <sequence type="described" ref="VSP_053552"/>
    </isoform>
    <isoform>
        <id>Q9Z0S6-5</id>
        <name>5</name>
        <name evidence="15">Cldn10a_i3</name>
        <sequence type="described" ref="VSP_053552 VSP_053553"/>
    </isoform>
    <isoform>
        <id>Q9Z0S6-6</id>
        <name>6</name>
        <name evidence="15">Cldn10b_i1</name>
        <sequence type="described" ref="VSP_053553"/>
    </isoform>
</comment>
<comment type="tissue specificity">
    <molecule>Isoform 1</molecule>
    <text evidence="5 7 9 10">Widely expressed, with highest expression detected in brain cortex, kidney and lung. In kidney, the expression is highest in medulla, with transcripts being detected in medullary thick ascending limb of Henle's loop (mTAL) and outer and inner medullary collecting ducts. Expressed in salivary glands and skin.</text>
</comment>
<comment type="tissue specificity">
    <molecule>Isoform 2</molecule>
    <text evidence="5 7 10 11">Detected in kidney with transcripts being detected in PCT, mTAL and cortical collecting duct. Detected in uterus. Expressed in proximal tubules (at protein level).</text>
</comment>
<comment type="tissue specificity">
    <molecule>Isoform 3</molecule>
    <text evidence="7">Only detected in kidney and uterus.</text>
</comment>
<comment type="tissue specificity">
    <molecule>Isoform 4</molecule>
    <text evidence="7">Detected in kidney with transcripts being detected in PCT, mTAL and cortical collecting duct. Detected in uterus.</text>
</comment>
<comment type="tissue specificity">
    <molecule>Isoform 5</molecule>
    <text evidence="7">Only detected in kidney and uterus.</text>
</comment>
<comment type="tissue specificity">
    <text evidence="3">Expressed in the inner ear where it is detected in organ of Corti, marginal cells of stria vascularis, Reissner's membrane and spiral limbus (at protein level).</text>
</comment>
<comment type="developmental stage">
    <text evidence="4 6">Detected in developing kidney at 14 dpc, with levels increasing towards adulthood. Expressed during tooth development: at 12 dpc, detected in the thickening tooth epithelium, at 13.5 dpc in the lingual basal epithelium of the bud epithelium, at 14.5 dpc in lingual epithelium and between 18 dpc to postnatal day 1 in odontoblasts and stratum intermedium.</text>
</comment>
<comment type="domain">
    <text evidence="7">The fourth transmembrane region (161-181), which is missing in isoform 3, isoform 5 and isoform 6, is necessary for integration into tight junctions.</text>
</comment>
<comment type="disruption phenotype">
    <molecule>Isoform 1</molecule>
    <text evidence="9">Deficient mice are born at normal Mendelian ratio and show normal macroscopic phenotype. Conditional knockout in the thick ascending limb (TAL) of Henle's loop in kidney leads to hypocalcemia, hypermagnesemia, hyperphosphatemia and nephrocalcinosis.</text>
</comment>
<comment type="disruption phenotype">
    <molecule>Isoform 2</molecule>
    <text evidence="11">Knockout mice are fertile and show normal macroscopic phenotype. They display a major decrease in chloride paracellular permeability in renal proximal tubules and compensatory increased paracellular calcium and magnesium permeability associated with hypermagnesemia.</text>
</comment>
<comment type="miscellaneous">
    <molecule>Isoform 4</molecule>
    <text evidence="16">Produced by alternative splicing of isoform 2.</text>
</comment>
<comment type="miscellaneous">
    <molecule>Isoform 5</molecule>
    <text evidence="16">Produced by alternative splicing of isoform 3.</text>
</comment>
<comment type="similarity">
    <text evidence="16">Belongs to the claudin family.</text>
</comment>
<name>CLD10_MOUSE</name>
<keyword id="KW-0025">Alternative splicing</keyword>
<keyword id="KW-0965">Cell junction</keyword>
<keyword id="KW-1003">Cell membrane</keyword>
<keyword id="KW-0256">Endoplasmic reticulum</keyword>
<keyword id="KW-0406">Ion transport</keyword>
<keyword id="KW-0472">Membrane</keyword>
<keyword id="KW-1185">Reference proteome</keyword>
<keyword id="KW-0796">Tight junction</keyword>
<keyword id="KW-0812">Transmembrane</keyword>
<keyword id="KW-1133">Transmembrane helix</keyword>
<keyword id="KW-0813">Transport</keyword>
<protein>
    <recommendedName>
        <fullName evidence="15">Claudin-10</fullName>
    </recommendedName>
</protein>
<dbReference type="EMBL" id="AF124425">
    <property type="protein sequence ID" value="AAD17320.1"/>
    <property type="molecule type" value="mRNA"/>
</dbReference>
<dbReference type="EMBL" id="AK020131">
    <property type="protein sequence ID" value="BAB32005.1"/>
    <property type="molecule type" value="mRNA"/>
</dbReference>
<dbReference type="EMBL" id="AC154377">
    <property type="status" value="NOT_ANNOTATED_CDS"/>
    <property type="molecule type" value="Genomic_DNA"/>
</dbReference>
<dbReference type="EMBL" id="CT025524">
    <property type="status" value="NOT_ANNOTATED_CDS"/>
    <property type="molecule type" value="Genomic_DNA"/>
</dbReference>
<dbReference type="EMBL" id="BC021770">
    <property type="protein sequence ID" value="AAH21770.1"/>
    <property type="molecule type" value="mRNA"/>
</dbReference>
<dbReference type="EMBL" id="BC029019">
    <property type="protein sequence ID" value="AAH29019.1"/>
    <property type="molecule type" value="mRNA"/>
</dbReference>
<dbReference type="CCDS" id="CCDS37009.1">
    <molecule id="Q9Z0S6-2"/>
</dbReference>
<dbReference type="CCDS" id="CCDS37010.1">
    <molecule id="Q9Z0S6-1"/>
</dbReference>
<dbReference type="CCDS" id="CCDS49566.1">
    <molecule id="Q9Z0S6-3"/>
</dbReference>
<dbReference type="RefSeq" id="NP_001153568.1">
    <molecule id="Q9Z0S6-4"/>
    <property type="nucleotide sequence ID" value="NM_001160096.1"/>
</dbReference>
<dbReference type="RefSeq" id="NP_001153569.1">
    <molecule id="Q9Z0S6-3"/>
    <property type="nucleotide sequence ID" value="NM_001160097.1"/>
</dbReference>
<dbReference type="RefSeq" id="NP_001153570.1">
    <molecule id="Q9Z0S6-5"/>
    <property type="nucleotide sequence ID" value="NM_001160098.1"/>
</dbReference>
<dbReference type="RefSeq" id="NP_001153571.1">
    <molecule id="Q9Z0S6-6"/>
    <property type="nucleotide sequence ID" value="NM_001160099.1"/>
</dbReference>
<dbReference type="RefSeq" id="NP_067361.2">
    <molecule id="Q9Z0S6-1"/>
    <property type="nucleotide sequence ID" value="NM_021386.4"/>
</dbReference>
<dbReference type="RefSeq" id="NP_076367.2">
    <molecule id="Q9Z0S6-2"/>
    <property type="nucleotide sequence ID" value="NM_023878.3"/>
</dbReference>
<dbReference type="SMR" id="Q9Z0S6"/>
<dbReference type="DIP" id="DIP-48952N"/>
<dbReference type="DIP" id="DIP-48954N"/>
<dbReference type="FunCoup" id="Q9Z0S6">
    <property type="interactions" value="330"/>
</dbReference>
<dbReference type="IntAct" id="Q9Z0S6">
    <property type="interactions" value="4"/>
</dbReference>
<dbReference type="STRING" id="10090.ENSMUSP00000097889"/>
<dbReference type="TCDB" id="1.H.1.1.10">
    <property type="family name" value="the claudin tight junction (claudin1) family"/>
</dbReference>
<dbReference type="GlyGen" id="Q9Z0S6">
    <property type="glycosylation" value="1 site"/>
</dbReference>
<dbReference type="iPTMnet" id="Q9Z0S6"/>
<dbReference type="PhosphoSitePlus" id="Q9Z0S6"/>
<dbReference type="PaxDb" id="10090-ENSMUSP00000097889"/>
<dbReference type="ProteomicsDB" id="283283">
    <molecule id="Q9Z0S6-1"/>
</dbReference>
<dbReference type="ProteomicsDB" id="283284">
    <molecule id="Q9Z0S6-2"/>
</dbReference>
<dbReference type="ProteomicsDB" id="283285">
    <molecule id="Q9Z0S6-3"/>
</dbReference>
<dbReference type="ProteomicsDB" id="283286">
    <molecule id="Q9Z0S6-4"/>
</dbReference>
<dbReference type="ProteomicsDB" id="283287">
    <molecule id="Q9Z0S6-5"/>
</dbReference>
<dbReference type="ProteomicsDB" id="283288">
    <molecule id="Q9Z0S6-6"/>
</dbReference>
<dbReference type="Antibodypedia" id="4562">
    <property type="antibodies" value="262 antibodies from 32 providers"/>
</dbReference>
<dbReference type="DNASU" id="58187"/>
<dbReference type="Ensembl" id="ENSMUST00000047761.13">
    <molecule id="Q9Z0S6-2"/>
    <property type="protein sequence ID" value="ENSMUSP00000041616.6"/>
    <property type="gene ID" value="ENSMUSG00000022132.16"/>
</dbReference>
<dbReference type="Ensembl" id="ENSMUST00000071546.14">
    <molecule id="Q9Z0S6-3"/>
    <property type="protein sequence ID" value="ENSMUSP00000071476.7"/>
    <property type="gene ID" value="ENSMUSG00000022132.16"/>
</dbReference>
<dbReference type="Ensembl" id="ENSMUST00000100314.4">
    <molecule id="Q9Z0S6-1"/>
    <property type="protein sequence ID" value="ENSMUSP00000097889.4"/>
    <property type="gene ID" value="ENSMUSG00000022132.16"/>
</dbReference>
<dbReference type="GeneID" id="58187"/>
<dbReference type="KEGG" id="mmu:58187"/>
<dbReference type="UCSC" id="uc007uyw.2">
    <molecule id="Q9Z0S6-2"/>
    <property type="organism name" value="mouse"/>
</dbReference>
<dbReference type="UCSC" id="uc007uyx.2">
    <molecule id="Q9Z0S6-1"/>
    <property type="organism name" value="mouse"/>
</dbReference>
<dbReference type="UCSC" id="uc011zqb.1">
    <molecule id="Q9Z0S6-4"/>
    <property type="organism name" value="mouse"/>
</dbReference>
<dbReference type="UCSC" id="uc011zqc.1">
    <molecule id="Q9Z0S6-5"/>
    <property type="organism name" value="mouse"/>
</dbReference>
<dbReference type="UCSC" id="uc011zqd.1">
    <molecule id="Q9Z0S6-3"/>
    <property type="organism name" value="mouse"/>
</dbReference>
<dbReference type="UCSC" id="uc011zqe.1">
    <molecule id="Q9Z0S6-6"/>
    <property type="organism name" value="mouse"/>
</dbReference>
<dbReference type="AGR" id="MGI:1913101"/>
<dbReference type="CTD" id="9071"/>
<dbReference type="MGI" id="MGI:1913101">
    <property type="gene designation" value="Cldn10"/>
</dbReference>
<dbReference type="VEuPathDB" id="HostDB:ENSMUSG00000022132"/>
<dbReference type="eggNOG" id="ENOG502QPNP">
    <property type="taxonomic scope" value="Eukaryota"/>
</dbReference>
<dbReference type="GeneTree" id="ENSGT00940000155232"/>
<dbReference type="HOGENOM" id="CLU_076370_0_0_1"/>
<dbReference type="InParanoid" id="Q9Z0S6"/>
<dbReference type="OMA" id="CKEFISM"/>
<dbReference type="OrthoDB" id="9936647at2759"/>
<dbReference type="PhylomeDB" id="Q9Z0S6"/>
<dbReference type="TreeFam" id="TF331936"/>
<dbReference type="BioGRID-ORCS" id="58187">
    <property type="hits" value="3 hits in 79 CRISPR screens"/>
</dbReference>
<dbReference type="ChiTaRS" id="Cldn10">
    <property type="organism name" value="mouse"/>
</dbReference>
<dbReference type="PRO" id="PR:Q9Z0S6"/>
<dbReference type="Proteomes" id="UP000000589">
    <property type="component" value="Chromosome 14"/>
</dbReference>
<dbReference type="RNAct" id="Q9Z0S6">
    <property type="molecule type" value="protein"/>
</dbReference>
<dbReference type="Bgee" id="ENSMUSG00000022132">
    <property type="expression patterns" value="Expressed in right kidney and 162 other cell types or tissues"/>
</dbReference>
<dbReference type="GO" id="GO:0005923">
    <property type="term" value="C:bicellular tight junction"/>
    <property type="evidence" value="ECO:0000314"/>
    <property type="project" value="MGI"/>
</dbReference>
<dbReference type="GO" id="GO:0005737">
    <property type="term" value="C:cytoplasm"/>
    <property type="evidence" value="ECO:0000314"/>
    <property type="project" value="MGI"/>
</dbReference>
<dbReference type="GO" id="GO:0005783">
    <property type="term" value="C:endoplasmic reticulum"/>
    <property type="evidence" value="ECO:0000314"/>
    <property type="project" value="UniProtKB"/>
</dbReference>
<dbReference type="GO" id="GO:0005886">
    <property type="term" value="C:plasma membrane"/>
    <property type="evidence" value="ECO:0000314"/>
    <property type="project" value="MGI"/>
</dbReference>
<dbReference type="GO" id="GO:0070160">
    <property type="term" value="C:tight junction"/>
    <property type="evidence" value="ECO:0000314"/>
    <property type="project" value="UniProtKB"/>
</dbReference>
<dbReference type="GO" id="GO:0042802">
    <property type="term" value="F:identical protein binding"/>
    <property type="evidence" value="ECO:0000250"/>
    <property type="project" value="UniProtKB"/>
</dbReference>
<dbReference type="GO" id="GO:0160187">
    <property type="term" value="F:paracellular tight junction channel activity"/>
    <property type="evidence" value="ECO:0000314"/>
    <property type="project" value="UniProtKB"/>
</dbReference>
<dbReference type="GO" id="GO:0005198">
    <property type="term" value="F:structural molecule activity"/>
    <property type="evidence" value="ECO:0007669"/>
    <property type="project" value="InterPro"/>
</dbReference>
<dbReference type="GO" id="GO:0016338">
    <property type="term" value="P:calcium-independent cell-cell adhesion via plasma membrane cell-adhesion molecules"/>
    <property type="evidence" value="ECO:0000250"/>
    <property type="project" value="UniProtKB"/>
</dbReference>
<dbReference type="GO" id="GO:0006811">
    <property type="term" value="P:monoatomic ion transport"/>
    <property type="evidence" value="ECO:0007669"/>
    <property type="project" value="UniProtKB-KW"/>
</dbReference>
<dbReference type="GO" id="GO:0160184">
    <property type="term" value="P:paracellular transport"/>
    <property type="evidence" value="ECO:0000314"/>
    <property type="project" value="UniProtKB"/>
</dbReference>
<dbReference type="GO" id="GO:0043269">
    <property type="term" value="P:regulation of monoatomic ion transport"/>
    <property type="evidence" value="ECO:0000250"/>
    <property type="project" value="UniProtKB"/>
</dbReference>
<dbReference type="FunFam" id="1.20.140.150:FF:000001">
    <property type="entry name" value="Claudin"/>
    <property type="match status" value="1"/>
</dbReference>
<dbReference type="Gene3D" id="1.20.140.150">
    <property type="match status" value="1"/>
</dbReference>
<dbReference type="InterPro" id="IPR006187">
    <property type="entry name" value="Claudin"/>
</dbReference>
<dbReference type="InterPro" id="IPR003554">
    <property type="entry name" value="Claudin10"/>
</dbReference>
<dbReference type="InterPro" id="IPR017974">
    <property type="entry name" value="Claudin_CS"/>
</dbReference>
<dbReference type="InterPro" id="IPR004031">
    <property type="entry name" value="PMP22/EMP/MP20/Claudin"/>
</dbReference>
<dbReference type="PANTHER" id="PTHR12002">
    <property type="entry name" value="CLAUDIN"/>
    <property type="match status" value="1"/>
</dbReference>
<dbReference type="Pfam" id="PF00822">
    <property type="entry name" value="PMP22_Claudin"/>
    <property type="match status" value="1"/>
</dbReference>
<dbReference type="PRINTS" id="PR01077">
    <property type="entry name" value="CLAUDIN"/>
</dbReference>
<dbReference type="PRINTS" id="PR01383">
    <property type="entry name" value="CLAUDIN10"/>
</dbReference>
<dbReference type="PROSITE" id="PS01346">
    <property type="entry name" value="CLAUDIN"/>
    <property type="match status" value="1"/>
</dbReference>